<name>Y913_STAS1</name>
<evidence type="ECO:0000255" key="1">
    <source>
        <dbReference type="HAMAP-Rule" id="MF_00829"/>
    </source>
</evidence>
<reference key="1">
    <citation type="journal article" date="2005" name="Proc. Natl. Acad. Sci. U.S.A.">
        <title>Whole genome sequence of Staphylococcus saprophyticus reveals the pathogenesis of uncomplicated urinary tract infection.</title>
        <authorList>
            <person name="Kuroda M."/>
            <person name="Yamashita A."/>
            <person name="Hirakawa H."/>
            <person name="Kumano M."/>
            <person name="Morikawa K."/>
            <person name="Higashide M."/>
            <person name="Maruyama A."/>
            <person name="Inose Y."/>
            <person name="Matoba K."/>
            <person name="Toh H."/>
            <person name="Kuhara S."/>
            <person name="Hattori M."/>
            <person name="Ohta T."/>
        </authorList>
    </citation>
    <scope>NUCLEOTIDE SEQUENCE [LARGE SCALE GENOMIC DNA]</scope>
    <source>
        <strain>ATCC 15305 / DSM 20229 / NCIMB 8711 / NCTC 7292 / S-41</strain>
    </source>
</reference>
<dbReference type="EMBL" id="AP008934">
    <property type="protein sequence ID" value="BAE18058.1"/>
    <property type="molecule type" value="Genomic_DNA"/>
</dbReference>
<dbReference type="RefSeq" id="WP_002482850.1">
    <property type="nucleotide sequence ID" value="NZ_MTGA01000031.1"/>
</dbReference>
<dbReference type="SMR" id="Q49YS5"/>
<dbReference type="KEGG" id="ssp:SSP0913"/>
<dbReference type="eggNOG" id="COG4840">
    <property type="taxonomic scope" value="Bacteria"/>
</dbReference>
<dbReference type="HOGENOM" id="CLU_199533_0_0_9"/>
<dbReference type="OrthoDB" id="2404926at2"/>
<dbReference type="Proteomes" id="UP000006371">
    <property type="component" value="Chromosome"/>
</dbReference>
<dbReference type="HAMAP" id="MF_00829">
    <property type="entry name" value="UPF0435"/>
    <property type="match status" value="1"/>
</dbReference>
<dbReference type="InterPro" id="IPR009507">
    <property type="entry name" value="UPF0435"/>
</dbReference>
<dbReference type="Pfam" id="PF06569">
    <property type="entry name" value="DUF1128"/>
    <property type="match status" value="1"/>
</dbReference>
<gene>
    <name type="ordered locus">SSP0913</name>
</gene>
<comment type="similarity">
    <text evidence="1">Belongs to the UPF0435 family.</text>
</comment>
<proteinExistence type="inferred from homology"/>
<keyword id="KW-1185">Reference proteome</keyword>
<sequence>MAKSIEQMIEEIRDRLNLVNQSLIDPDNYKSADEQEIREIHEYVTSKASFTPSEASAIADALGQIRK</sequence>
<accession>Q49YS5</accession>
<feature type="chain" id="PRO_0000291427" description="UPF0435 protein SSP0913">
    <location>
        <begin position="1"/>
        <end position="67"/>
    </location>
</feature>
<organism>
    <name type="scientific">Staphylococcus saprophyticus subsp. saprophyticus (strain ATCC 15305 / DSM 20229 / NCIMB 8711 / NCTC 7292 / S-41)</name>
    <dbReference type="NCBI Taxonomy" id="342451"/>
    <lineage>
        <taxon>Bacteria</taxon>
        <taxon>Bacillati</taxon>
        <taxon>Bacillota</taxon>
        <taxon>Bacilli</taxon>
        <taxon>Bacillales</taxon>
        <taxon>Staphylococcaceae</taxon>
        <taxon>Staphylococcus</taxon>
    </lineage>
</organism>
<protein>
    <recommendedName>
        <fullName evidence="1">UPF0435 protein SSP0913</fullName>
    </recommendedName>
</protein>